<proteinExistence type="evidence at protein level"/>
<evidence type="ECO:0000255" key="1">
    <source>
        <dbReference type="PROSITE-ProRule" id="PRU00274"/>
    </source>
</evidence>
<evidence type="ECO:0000269" key="2">
    <source>
    </source>
</evidence>
<keyword id="KW-0903">Direct protein sequencing</keyword>
<keyword id="KW-1199">Hemostasis impairing toxin</keyword>
<keyword id="KW-0378">Hydrolase</keyword>
<keyword id="KW-1202">Platelet aggregation activating toxin</keyword>
<keyword id="KW-0645">Protease</keyword>
<keyword id="KW-0964">Secreted</keyword>
<keyword id="KW-0720">Serine protease</keyword>
<keyword id="KW-0800">Toxin</keyword>
<protein>
    <recommendedName>
        <fullName>Snake venom serine protease IVa</fullName>
        <shortName>SVSP</shortName>
        <ecNumber>3.4.21.-</ecNumber>
    </recommendedName>
    <alternativeName>
        <fullName>Basic proteinase IVa</fullName>
    </alternativeName>
</protein>
<dbReference type="EC" id="3.4.21.-"/>
<dbReference type="PIR" id="S57201">
    <property type="entry name" value="S57201"/>
</dbReference>
<dbReference type="GO" id="GO:0005576">
    <property type="term" value="C:extracellular region"/>
    <property type="evidence" value="ECO:0007669"/>
    <property type="project" value="UniProtKB-SubCell"/>
</dbReference>
<dbReference type="GO" id="GO:0008236">
    <property type="term" value="F:serine-type peptidase activity"/>
    <property type="evidence" value="ECO:0007669"/>
    <property type="project" value="UniProtKB-KW"/>
</dbReference>
<dbReference type="GO" id="GO:0090729">
    <property type="term" value="F:toxin activity"/>
    <property type="evidence" value="ECO:0007669"/>
    <property type="project" value="UniProtKB-KW"/>
</dbReference>
<dbReference type="GO" id="GO:0006508">
    <property type="term" value="P:proteolysis"/>
    <property type="evidence" value="ECO:0007669"/>
    <property type="project" value="UniProtKB-KW"/>
</dbReference>
<comment type="function">
    <text evidence="2">Snake venom serine protease that potently induces platelet aggregation. Its aggregatory activity is partially inhibited by monoclonal antibodies against GPIb and the thrombin receptor. Its ability to induce intracellular Ca(2+) release is blocked by pretreating platelets with thrombin. Hydrolyzes thrombin chromogenic substrate CBS 34.47, but shows very weak coagulant activity. Can hydrolyze fibrinogen alpha-chains.</text>
</comment>
<comment type="activity regulation">
    <text evidence="2">Inactivated by p-APMSF, leupeptin, iodoacetamide, protein kinase C inhibitor, phosphatase inhibitor, ATP and PGE1. Is insensitive to acetylsalicylic acid, ADP scavenger system, protein kinase A inhibitor and hirudin.</text>
</comment>
<comment type="subunit">
    <text evidence="2">Dimer (it is unsure whether homo- or heterodimer).</text>
</comment>
<comment type="subcellular location">
    <subcellularLocation>
        <location>Secreted</location>
    </subcellularLocation>
</comment>
<comment type="tissue specificity">
    <text>Expressed by the venom gland.</text>
</comment>
<comment type="similarity">
    <text evidence="1">Belongs to the peptidase S1 family. Snake venom subfamily.</text>
</comment>
<feature type="chain" id="PRO_0000294992" description="Snake venom serine protease IVa">
    <location>
        <begin position="1"/>
        <end position="15" status="greater than"/>
    </location>
</feature>
<feature type="domain" description="Peptidase S1" evidence="1">
    <location>
        <begin position="1"/>
        <end position="15" status="greater than"/>
    </location>
</feature>
<feature type="non-terminal residue">
    <location>
        <position position="15"/>
    </location>
</feature>
<sequence length="15" mass="1638">VIGGAEENINEHRSL</sequence>
<organism>
    <name type="scientific">Cerastes cerastes</name>
    <name type="common">Horned desert viper</name>
    <dbReference type="NCBI Taxonomy" id="8697"/>
    <lineage>
        <taxon>Eukaryota</taxon>
        <taxon>Metazoa</taxon>
        <taxon>Chordata</taxon>
        <taxon>Craniata</taxon>
        <taxon>Vertebrata</taxon>
        <taxon>Euteleostomi</taxon>
        <taxon>Lepidosauria</taxon>
        <taxon>Squamata</taxon>
        <taxon>Bifurcata</taxon>
        <taxon>Unidentata</taxon>
        <taxon>Episquamata</taxon>
        <taxon>Toxicofera</taxon>
        <taxon>Serpentes</taxon>
        <taxon>Colubroidea</taxon>
        <taxon>Viperidae</taxon>
        <taxon>Viperinae</taxon>
        <taxon>Cerastes</taxon>
    </lineage>
</organism>
<accession>Q7LZF4</accession>
<reference key="1">
    <citation type="journal article" date="1995" name="Biochim. Biophys. Acta">
        <title>Characterization of a potent platelet aggregation inducer from Cerastes cerastes (Egyptian sand viper) venom.</title>
        <authorList>
            <person name="Basheer A.R."/>
            <person name="el-Asmar M.F."/>
            <person name="Soslau G."/>
        </authorList>
    </citation>
    <scope>PROTEIN SEQUENCE</scope>
    <scope>FUNCTION</scope>
    <scope>ACTIVITY REGULATION</scope>
    <scope>SUBUNIT</scope>
    <source>
        <tissue>Venom</tissue>
    </source>
</reference>
<name>VSP4A_CERCE</name>